<sequence length="364" mass="39357">MAKLRVGIVFGGKSAEHEVSLQSAKNIVDAIDKTRFDVVLLGIDKAGQWHVNDAENYLQNADDPAHIALRPSAISLAQVPGKHQHQLINAQNGQPLPTVDVIFPIVHGTLGEDGSLQGMLRVANLPFVGSDVLSSAACMDKDVAKRLLRDAGLNIAPFITLTRTNRHAFSFAEVESRLGLPLFVKPANQGSSVGVSKVANEAQYQQAVALAFEFDHKVVVEQGIKGREIECAVLGNDNPQASTCGEIVLNSEFYAYDTKYIDDNGAQVVVPAQIPSEVNDKIRAIAIQAYQTLGCAGMARVDVFLTADNEVVINEINTLPGFTNISMYPKLWQASGLGYTDLISRLIELALERHTANNALKTTM</sequence>
<name>DDLA_SALTI</name>
<protein>
    <recommendedName>
        <fullName>D-alanine--D-alanine ligase A</fullName>
        <ecNumber>6.3.2.4</ecNumber>
    </recommendedName>
    <alternativeName>
        <fullName>D-Ala-D-Ala ligase A</fullName>
    </alternativeName>
    <alternativeName>
        <fullName>D-alanylalanine synthetase A</fullName>
    </alternativeName>
</protein>
<organism>
    <name type="scientific">Salmonella typhi</name>
    <dbReference type="NCBI Taxonomy" id="90370"/>
    <lineage>
        <taxon>Bacteria</taxon>
        <taxon>Pseudomonadati</taxon>
        <taxon>Pseudomonadota</taxon>
        <taxon>Gammaproteobacteria</taxon>
        <taxon>Enterobacterales</taxon>
        <taxon>Enterobacteriaceae</taxon>
        <taxon>Salmonella</taxon>
    </lineage>
</organism>
<reference key="1">
    <citation type="journal article" date="2001" name="Nature">
        <title>Complete genome sequence of a multiple drug resistant Salmonella enterica serovar Typhi CT18.</title>
        <authorList>
            <person name="Parkhill J."/>
            <person name="Dougan G."/>
            <person name="James K.D."/>
            <person name="Thomson N.R."/>
            <person name="Pickard D."/>
            <person name="Wain J."/>
            <person name="Churcher C.M."/>
            <person name="Mungall K.L."/>
            <person name="Bentley S.D."/>
            <person name="Holden M.T.G."/>
            <person name="Sebaihia M."/>
            <person name="Baker S."/>
            <person name="Basham D."/>
            <person name="Brooks K."/>
            <person name="Chillingworth T."/>
            <person name="Connerton P."/>
            <person name="Cronin A."/>
            <person name="Davis P."/>
            <person name="Davies R.M."/>
            <person name="Dowd L."/>
            <person name="White N."/>
            <person name="Farrar J."/>
            <person name="Feltwell T."/>
            <person name="Hamlin N."/>
            <person name="Haque A."/>
            <person name="Hien T.T."/>
            <person name="Holroyd S."/>
            <person name="Jagels K."/>
            <person name="Krogh A."/>
            <person name="Larsen T.S."/>
            <person name="Leather S."/>
            <person name="Moule S."/>
            <person name="O'Gaora P."/>
            <person name="Parry C."/>
            <person name="Quail M.A."/>
            <person name="Rutherford K.M."/>
            <person name="Simmonds M."/>
            <person name="Skelton J."/>
            <person name="Stevens K."/>
            <person name="Whitehead S."/>
            <person name="Barrell B.G."/>
        </authorList>
    </citation>
    <scope>NUCLEOTIDE SEQUENCE [LARGE SCALE GENOMIC DNA]</scope>
    <source>
        <strain>CT18</strain>
    </source>
</reference>
<reference key="2">
    <citation type="journal article" date="2003" name="J. Bacteriol.">
        <title>Comparative genomics of Salmonella enterica serovar Typhi strains Ty2 and CT18.</title>
        <authorList>
            <person name="Deng W."/>
            <person name="Liou S.-R."/>
            <person name="Plunkett G. III"/>
            <person name="Mayhew G.F."/>
            <person name="Rose D.J."/>
            <person name="Burland V."/>
            <person name="Kodoyianni V."/>
            <person name="Schwartz D.C."/>
            <person name="Blattner F.R."/>
        </authorList>
    </citation>
    <scope>NUCLEOTIDE SEQUENCE [LARGE SCALE GENOMIC DNA]</scope>
    <source>
        <strain>ATCC 700931 / Ty2</strain>
    </source>
</reference>
<accession>P0A1F1</accession>
<accession>P15051</accession>
<gene>
    <name type="primary">ddlA</name>
    <name type="ordered locus">STY0412</name>
    <name type="ordered locus">t2484</name>
</gene>
<keyword id="KW-0067">ATP-binding</keyword>
<keyword id="KW-0133">Cell shape</keyword>
<keyword id="KW-0961">Cell wall biogenesis/degradation</keyword>
<keyword id="KW-0963">Cytoplasm</keyword>
<keyword id="KW-0436">Ligase</keyword>
<keyword id="KW-0460">Magnesium</keyword>
<keyword id="KW-0464">Manganese</keyword>
<keyword id="KW-0479">Metal-binding</keyword>
<keyword id="KW-0547">Nucleotide-binding</keyword>
<keyword id="KW-0573">Peptidoglycan synthesis</keyword>
<comment type="function">
    <text evidence="1">Cell wall formation.</text>
</comment>
<comment type="catalytic activity">
    <reaction>
        <text>2 D-alanine + ATP = D-alanyl-D-alanine + ADP + phosphate + H(+)</text>
        <dbReference type="Rhea" id="RHEA:11224"/>
        <dbReference type="ChEBI" id="CHEBI:15378"/>
        <dbReference type="ChEBI" id="CHEBI:30616"/>
        <dbReference type="ChEBI" id="CHEBI:43474"/>
        <dbReference type="ChEBI" id="CHEBI:57416"/>
        <dbReference type="ChEBI" id="CHEBI:57822"/>
        <dbReference type="ChEBI" id="CHEBI:456216"/>
        <dbReference type="EC" id="6.3.2.4"/>
    </reaction>
</comment>
<comment type="cofactor">
    <cofactor evidence="1">
        <name>Mg(2+)</name>
        <dbReference type="ChEBI" id="CHEBI:18420"/>
    </cofactor>
    <cofactor evidence="1">
        <name>Mn(2+)</name>
        <dbReference type="ChEBI" id="CHEBI:29035"/>
    </cofactor>
    <text evidence="1">Binds 2 magnesium or manganese ions per subunit.</text>
</comment>
<comment type="pathway">
    <text>Cell wall biogenesis; peptidoglycan biosynthesis.</text>
</comment>
<comment type="subcellular location">
    <subcellularLocation>
        <location evidence="1">Cytoplasm</location>
    </subcellularLocation>
</comment>
<comment type="similarity">
    <text evidence="2">Belongs to the D-alanine--D-alanine ligase family.</text>
</comment>
<evidence type="ECO:0000250" key="1"/>
<evidence type="ECO:0000305" key="2"/>
<proteinExistence type="inferred from homology"/>
<dbReference type="EC" id="6.3.2.4"/>
<dbReference type="EMBL" id="AL513382">
    <property type="protein sequence ID" value="CAD08835.1"/>
    <property type="molecule type" value="Genomic_DNA"/>
</dbReference>
<dbReference type="EMBL" id="AE014613">
    <property type="protein sequence ID" value="AAO70072.1"/>
    <property type="molecule type" value="Genomic_DNA"/>
</dbReference>
<dbReference type="RefSeq" id="NP_454975.1">
    <property type="nucleotide sequence ID" value="NC_003198.1"/>
</dbReference>
<dbReference type="RefSeq" id="WP_001096588.1">
    <property type="nucleotide sequence ID" value="NZ_WSUR01000017.1"/>
</dbReference>
<dbReference type="SMR" id="P0A1F1"/>
<dbReference type="STRING" id="220341.gene:17584440"/>
<dbReference type="KEGG" id="stt:t2484"/>
<dbReference type="KEGG" id="sty:STY0412"/>
<dbReference type="PATRIC" id="fig|220341.7.peg.409"/>
<dbReference type="eggNOG" id="COG1181">
    <property type="taxonomic scope" value="Bacteria"/>
</dbReference>
<dbReference type="HOGENOM" id="CLU_039268_0_1_6"/>
<dbReference type="OMA" id="NMHSKYF"/>
<dbReference type="OrthoDB" id="9813261at2"/>
<dbReference type="UniPathway" id="UPA00219"/>
<dbReference type="Proteomes" id="UP000000541">
    <property type="component" value="Chromosome"/>
</dbReference>
<dbReference type="Proteomes" id="UP000002670">
    <property type="component" value="Chromosome"/>
</dbReference>
<dbReference type="GO" id="GO:0005829">
    <property type="term" value="C:cytosol"/>
    <property type="evidence" value="ECO:0007669"/>
    <property type="project" value="TreeGrafter"/>
</dbReference>
<dbReference type="GO" id="GO:0005524">
    <property type="term" value="F:ATP binding"/>
    <property type="evidence" value="ECO:0007669"/>
    <property type="project" value="UniProtKB-KW"/>
</dbReference>
<dbReference type="GO" id="GO:0008716">
    <property type="term" value="F:D-alanine-D-alanine ligase activity"/>
    <property type="evidence" value="ECO:0007669"/>
    <property type="project" value="UniProtKB-UniRule"/>
</dbReference>
<dbReference type="GO" id="GO:0046872">
    <property type="term" value="F:metal ion binding"/>
    <property type="evidence" value="ECO:0007669"/>
    <property type="project" value="UniProtKB-KW"/>
</dbReference>
<dbReference type="GO" id="GO:0071555">
    <property type="term" value="P:cell wall organization"/>
    <property type="evidence" value="ECO:0007669"/>
    <property type="project" value="UniProtKB-KW"/>
</dbReference>
<dbReference type="GO" id="GO:0009252">
    <property type="term" value="P:peptidoglycan biosynthetic process"/>
    <property type="evidence" value="ECO:0007669"/>
    <property type="project" value="UniProtKB-UniRule"/>
</dbReference>
<dbReference type="GO" id="GO:0008360">
    <property type="term" value="P:regulation of cell shape"/>
    <property type="evidence" value="ECO:0007669"/>
    <property type="project" value="UniProtKB-KW"/>
</dbReference>
<dbReference type="FunFam" id="3.30.1490.20:FF:000007">
    <property type="entry name" value="D-alanine--D-alanine ligase"/>
    <property type="match status" value="1"/>
</dbReference>
<dbReference type="FunFam" id="3.30.470.20:FF:000008">
    <property type="entry name" value="D-alanine--D-alanine ligase"/>
    <property type="match status" value="1"/>
</dbReference>
<dbReference type="FunFam" id="3.40.50.20:FF:000015">
    <property type="entry name" value="D-alanine--D-alanine ligase"/>
    <property type="match status" value="1"/>
</dbReference>
<dbReference type="Gene3D" id="3.40.50.20">
    <property type="match status" value="1"/>
</dbReference>
<dbReference type="Gene3D" id="3.30.1490.20">
    <property type="entry name" value="ATP-grasp fold, A domain"/>
    <property type="match status" value="1"/>
</dbReference>
<dbReference type="Gene3D" id="3.30.470.20">
    <property type="entry name" value="ATP-grasp fold, B domain"/>
    <property type="match status" value="1"/>
</dbReference>
<dbReference type="HAMAP" id="MF_00047">
    <property type="entry name" value="Dala_Dala_lig"/>
    <property type="match status" value="1"/>
</dbReference>
<dbReference type="InterPro" id="IPR011761">
    <property type="entry name" value="ATP-grasp"/>
</dbReference>
<dbReference type="InterPro" id="IPR013815">
    <property type="entry name" value="ATP_grasp_subdomain_1"/>
</dbReference>
<dbReference type="InterPro" id="IPR000291">
    <property type="entry name" value="D-Ala_lig_Van_CS"/>
</dbReference>
<dbReference type="InterPro" id="IPR005905">
    <property type="entry name" value="D_ala_D_ala"/>
</dbReference>
<dbReference type="InterPro" id="IPR011095">
    <property type="entry name" value="Dala_Dala_lig_C"/>
</dbReference>
<dbReference type="InterPro" id="IPR011127">
    <property type="entry name" value="Dala_Dala_lig_N"/>
</dbReference>
<dbReference type="InterPro" id="IPR016185">
    <property type="entry name" value="PreATP-grasp_dom_sf"/>
</dbReference>
<dbReference type="NCBIfam" id="TIGR01205">
    <property type="entry name" value="D_ala_D_alaTIGR"/>
    <property type="match status" value="1"/>
</dbReference>
<dbReference type="NCBIfam" id="NF002378">
    <property type="entry name" value="PRK01372.1"/>
    <property type="match status" value="1"/>
</dbReference>
<dbReference type="NCBIfam" id="NF002525">
    <property type="entry name" value="PRK01966.1-1"/>
    <property type="match status" value="1"/>
</dbReference>
<dbReference type="NCBIfam" id="NF002528">
    <property type="entry name" value="PRK01966.1-4"/>
    <property type="match status" value="1"/>
</dbReference>
<dbReference type="PANTHER" id="PTHR23132">
    <property type="entry name" value="D-ALANINE--D-ALANINE LIGASE"/>
    <property type="match status" value="1"/>
</dbReference>
<dbReference type="PANTHER" id="PTHR23132:SF25">
    <property type="entry name" value="D-ALANINE--D-ALANINE LIGASE A"/>
    <property type="match status" value="1"/>
</dbReference>
<dbReference type="Pfam" id="PF07478">
    <property type="entry name" value="Dala_Dala_lig_C"/>
    <property type="match status" value="1"/>
</dbReference>
<dbReference type="Pfam" id="PF01820">
    <property type="entry name" value="Dala_Dala_lig_N"/>
    <property type="match status" value="1"/>
</dbReference>
<dbReference type="PIRSF" id="PIRSF039102">
    <property type="entry name" value="Ddl/VanB"/>
    <property type="match status" value="1"/>
</dbReference>
<dbReference type="SUPFAM" id="SSF56059">
    <property type="entry name" value="Glutathione synthetase ATP-binding domain-like"/>
    <property type="match status" value="1"/>
</dbReference>
<dbReference type="SUPFAM" id="SSF52440">
    <property type="entry name" value="PreATP-grasp domain"/>
    <property type="match status" value="1"/>
</dbReference>
<dbReference type="PROSITE" id="PS50975">
    <property type="entry name" value="ATP_GRASP"/>
    <property type="match status" value="1"/>
</dbReference>
<dbReference type="PROSITE" id="PS00843">
    <property type="entry name" value="DALA_DALA_LIGASE_1"/>
    <property type="match status" value="1"/>
</dbReference>
<dbReference type="PROSITE" id="PS00844">
    <property type="entry name" value="DALA_DALA_LIGASE_2"/>
    <property type="match status" value="1"/>
</dbReference>
<feature type="initiator methionine" description="Removed" evidence="1">
    <location>
        <position position="1"/>
    </location>
</feature>
<feature type="chain" id="PRO_0000177867" description="D-alanine--D-alanine ligase A">
    <location>
        <begin position="2"/>
        <end position="364"/>
    </location>
</feature>
<feature type="domain" description="ATP-grasp">
    <location>
        <begin position="145"/>
        <end position="348"/>
    </location>
</feature>
<feature type="binding site" evidence="1">
    <location>
        <begin position="175"/>
        <end position="230"/>
    </location>
    <ligand>
        <name>ATP</name>
        <dbReference type="ChEBI" id="CHEBI:30616"/>
    </ligand>
</feature>
<feature type="binding site" evidence="1">
    <location>
        <position position="302"/>
    </location>
    <ligand>
        <name>Mg(2+)</name>
        <dbReference type="ChEBI" id="CHEBI:18420"/>
        <label>1</label>
    </ligand>
</feature>
<feature type="binding site" evidence="1">
    <location>
        <position position="315"/>
    </location>
    <ligand>
        <name>Mg(2+)</name>
        <dbReference type="ChEBI" id="CHEBI:18420"/>
        <label>1</label>
    </ligand>
</feature>
<feature type="binding site" evidence="1">
    <location>
        <position position="315"/>
    </location>
    <ligand>
        <name>Mg(2+)</name>
        <dbReference type="ChEBI" id="CHEBI:18420"/>
        <label>2</label>
    </ligand>
</feature>
<feature type="binding site" evidence="1">
    <location>
        <position position="317"/>
    </location>
    <ligand>
        <name>Mg(2+)</name>
        <dbReference type="ChEBI" id="CHEBI:18420"/>
        <label>2</label>
    </ligand>
</feature>